<organism>
    <name type="scientific">Escherichia coli (strain 55989 / EAEC)</name>
    <dbReference type="NCBI Taxonomy" id="585055"/>
    <lineage>
        <taxon>Bacteria</taxon>
        <taxon>Pseudomonadati</taxon>
        <taxon>Pseudomonadota</taxon>
        <taxon>Gammaproteobacteria</taxon>
        <taxon>Enterobacterales</taxon>
        <taxon>Enterobacteriaceae</taxon>
        <taxon>Escherichia</taxon>
    </lineage>
</organism>
<accession>B7LA84</accession>
<sequence>MLRIADKTFDSHLFTGTGKFASSQLMVEAIRASGSQLVTLAMKRVDLRQHNDAILEPLIAAGVTLLPNTSGAKTAEEAIFAAHLAREALGTNWLKLEIHPDARWLLPDPIETLKAAETLVQQGFVVLPYCGADPVLCKRLEEVGCAAVMPLGAPIGSNQGLETRAMLEIIIQQATVPVVVDAGIGVPSHAAQALEMGADAVLVNTAIAVADDPVNMAKAFRLAVEAGLLARQSGPGSRSHFAHATSPLTGFLEASA</sequence>
<protein>
    <recommendedName>
        <fullName evidence="1">Thiazole synthase</fullName>
        <ecNumber evidence="1">2.8.1.10</ecNumber>
    </recommendedName>
</protein>
<dbReference type="EC" id="2.8.1.10" evidence="1"/>
<dbReference type="EMBL" id="CU928145">
    <property type="protein sequence ID" value="CAV01235.1"/>
    <property type="molecule type" value="Genomic_DNA"/>
</dbReference>
<dbReference type="RefSeq" id="WP_000944103.1">
    <property type="nucleotide sequence ID" value="NC_011748.1"/>
</dbReference>
<dbReference type="SMR" id="B7LA84"/>
<dbReference type="GeneID" id="75205508"/>
<dbReference type="KEGG" id="eck:EC55989_4475"/>
<dbReference type="HOGENOM" id="CLU_062233_1_0_6"/>
<dbReference type="UniPathway" id="UPA00060"/>
<dbReference type="Proteomes" id="UP000000746">
    <property type="component" value="Chromosome"/>
</dbReference>
<dbReference type="GO" id="GO:0005737">
    <property type="term" value="C:cytoplasm"/>
    <property type="evidence" value="ECO:0007669"/>
    <property type="project" value="UniProtKB-SubCell"/>
</dbReference>
<dbReference type="GO" id="GO:1990107">
    <property type="term" value="F:thiazole synthase activity"/>
    <property type="evidence" value="ECO:0007669"/>
    <property type="project" value="UniProtKB-EC"/>
</dbReference>
<dbReference type="GO" id="GO:0009229">
    <property type="term" value="P:thiamine diphosphate biosynthetic process"/>
    <property type="evidence" value="ECO:0007669"/>
    <property type="project" value="UniProtKB-UniRule"/>
</dbReference>
<dbReference type="CDD" id="cd04728">
    <property type="entry name" value="ThiG"/>
    <property type="match status" value="1"/>
</dbReference>
<dbReference type="FunFam" id="3.20.20.70:FF:000049">
    <property type="entry name" value="Thiazole synthase"/>
    <property type="match status" value="1"/>
</dbReference>
<dbReference type="Gene3D" id="3.20.20.70">
    <property type="entry name" value="Aldolase class I"/>
    <property type="match status" value="1"/>
</dbReference>
<dbReference type="HAMAP" id="MF_00443">
    <property type="entry name" value="ThiG"/>
    <property type="match status" value="1"/>
</dbReference>
<dbReference type="InterPro" id="IPR013785">
    <property type="entry name" value="Aldolase_TIM"/>
</dbReference>
<dbReference type="InterPro" id="IPR033983">
    <property type="entry name" value="Thiazole_synthase_ThiG"/>
</dbReference>
<dbReference type="InterPro" id="IPR008867">
    <property type="entry name" value="ThiG"/>
</dbReference>
<dbReference type="PANTHER" id="PTHR34266">
    <property type="entry name" value="THIAZOLE SYNTHASE"/>
    <property type="match status" value="1"/>
</dbReference>
<dbReference type="PANTHER" id="PTHR34266:SF2">
    <property type="entry name" value="THIAZOLE SYNTHASE"/>
    <property type="match status" value="1"/>
</dbReference>
<dbReference type="Pfam" id="PF05690">
    <property type="entry name" value="ThiG"/>
    <property type="match status" value="1"/>
</dbReference>
<dbReference type="SUPFAM" id="SSF110399">
    <property type="entry name" value="ThiG-like"/>
    <property type="match status" value="1"/>
</dbReference>
<keyword id="KW-0963">Cytoplasm</keyword>
<keyword id="KW-1185">Reference proteome</keyword>
<keyword id="KW-0704">Schiff base</keyword>
<keyword id="KW-0784">Thiamine biosynthesis</keyword>
<keyword id="KW-0808">Transferase</keyword>
<evidence type="ECO:0000255" key="1">
    <source>
        <dbReference type="HAMAP-Rule" id="MF_00443"/>
    </source>
</evidence>
<reference key="1">
    <citation type="journal article" date="2009" name="PLoS Genet.">
        <title>Organised genome dynamics in the Escherichia coli species results in highly diverse adaptive paths.</title>
        <authorList>
            <person name="Touchon M."/>
            <person name="Hoede C."/>
            <person name="Tenaillon O."/>
            <person name="Barbe V."/>
            <person name="Baeriswyl S."/>
            <person name="Bidet P."/>
            <person name="Bingen E."/>
            <person name="Bonacorsi S."/>
            <person name="Bouchier C."/>
            <person name="Bouvet O."/>
            <person name="Calteau A."/>
            <person name="Chiapello H."/>
            <person name="Clermont O."/>
            <person name="Cruveiller S."/>
            <person name="Danchin A."/>
            <person name="Diard M."/>
            <person name="Dossat C."/>
            <person name="Karoui M.E."/>
            <person name="Frapy E."/>
            <person name="Garry L."/>
            <person name="Ghigo J.M."/>
            <person name="Gilles A.M."/>
            <person name="Johnson J."/>
            <person name="Le Bouguenec C."/>
            <person name="Lescat M."/>
            <person name="Mangenot S."/>
            <person name="Martinez-Jehanne V."/>
            <person name="Matic I."/>
            <person name="Nassif X."/>
            <person name="Oztas S."/>
            <person name="Petit M.A."/>
            <person name="Pichon C."/>
            <person name="Rouy Z."/>
            <person name="Ruf C.S."/>
            <person name="Schneider D."/>
            <person name="Tourret J."/>
            <person name="Vacherie B."/>
            <person name="Vallenet D."/>
            <person name="Medigue C."/>
            <person name="Rocha E.P.C."/>
            <person name="Denamur E."/>
        </authorList>
    </citation>
    <scope>NUCLEOTIDE SEQUENCE [LARGE SCALE GENOMIC DNA]</scope>
    <source>
        <strain>55989 / EAEC</strain>
    </source>
</reference>
<name>THIG_ECO55</name>
<proteinExistence type="inferred from homology"/>
<gene>
    <name evidence="1" type="primary">thiG</name>
    <name type="ordered locus">EC55989_4475</name>
</gene>
<feature type="chain" id="PRO_1000196854" description="Thiazole synthase">
    <location>
        <begin position="1"/>
        <end position="256"/>
    </location>
</feature>
<feature type="active site" description="Schiff-base intermediate with DXP" evidence="1">
    <location>
        <position position="95"/>
    </location>
</feature>
<feature type="binding site" evidence="1">
    <location>
        <position position="156"/>
    </location>
    <ligand>
        <name>1-deoxy-D-xylulose 5-phosphate</name>
        <dbReference type="ChEBI" id="CHEBI:57792"/>
    </ligand>
</feature>
<feature type="binding site" evidence="1">
    <location>
        <begin position="182"/>
        <end position="183"/>
    </location>
    <ligand>
        <name>1-deoxy-D-xylulose 5-phosphate</name>
        <dbReference type="ChEBI" id="CHEBI:57792"/>
    </ligand>
</feature>
<feature type="binding site" evidence="1">
    <location>
        <begin position="204"/>
        <end position="205"/>
    </location>
    <ligand>
        <name>1-deoxy-D-xylulose 5-phosphate</name>
        <dbReference type="ChEBI" id="CHEBI:57792"/>
    </ligand>
</feature>
<comment type="function">
    <text evidence="1">Catalyzes the rearrangement of 1-deoxy-D-xylulose 5-phosphate (DXP) to produce the thiazole phosphate moiety of thiamine. Sulfur is provided by the thiocarboxylate moiety of the carrier protein ThiS. In vitro, sulfur can be provided by H(2)S.</text>
</comment>
<comment type="catalytic activity">
    <reaction evidence="1">
        <text>[ThiS sulfur-carrier protein]-C-terminal-Gly-aminoethanethioate + 2-iminoacetate + 1-deoxy-D-xylulose 5-phosphate = [ThiS sulfur-carrier protein]-C-terminal Gly-Gly + 2-[(2R,5Z)-2-carboxy-4-methylthiazol-5(2H)-ylidene]ethyl phosphate + 2 H2O + H(+)</text>
        <dbReference type="Rhea" id="RHEA:26297"/>
        <dbReference type="Rhea" id="RHEA-COMP:12909"/>
        <dbReference type="Rhea" id="RHEA-COMP:19908"/>
        <dbReference type="ChEBI" id="CHEBI:15377"/>
        <dbReference type="ChEBI" id="CHEBI:15378"/>
        <dbReference type="ChEBI" id="CHEBI:57792"/>
        <dbReference type="ChEBI" id="CHEBI:62899"/>
        <dbReference type="ChEBI" id="CHEBI:77846"/>
        <dbReference type="ChEBI" id="CHEBI:90778"/>
        <dbReference type="ChEBI" id="CHEBI:232372"/>
        <dbReference type="EC" id="2.8.1.10"/>
    </reaction>
</comment>
<comment type="pathway">
    <text evidence="1">Cofactor biosynthesis; thiamine diphosphate biosynthesis.</text>
</comment>
<comment type="subunit">
    <text evidence="1">Homotetramer. Forms heterodimers with either ThiH or ThiS.</text>
</comment>
<comment type="subcellular location">
    <subcellularLocation>
        <location evidence="1">Cytoplasm</location>
    </subcellularLocation>
</comment>
<comment type="similarity">
    <text evidence="1">Belongs to the ThiG family.</text>
</comment>